<comment type="function">
    <text evidence="5">Component of the mitochondrial ribosome (mitoribosome), a dedicated translation machinery responsible for the synthesis of mitochondrial genome-encoded proteins, including at least some of the essential transmembrane subunits of the mitochondrial respiratory chain. The mitoribosomes are attached to the mitochondrial inner membrane and translation products are cotranslationally integrated into the membrane.</text>
</comment>
<comment type="subunit">
    <text evidence="2">Component of the mitochondrial large ribosomal subunit (mt-LSU). Mature N.crassa 74S mitochondrial ribosomes consist of a small (37S) and a large (54S) subunit. The 37S small subunit contains a 16S ribosomal RNA (16S mt-rRNA) and 32 different proteins. The 54S large subunit contains a 23S rRNA (23S mt-rRNA) and 42 different proteins.</text>
</comment>
<comment type="subcellular location">
    <subcellularLocation>
        <location evidence="2">Mitochondrion</location>
    </subcellularLocation>
</comment>
<comment type="similarity">
    <text evidence="4">Belongs to the mitochondrion-specific ribosomal protein mL49 family.</text>
</comment>
<reference key="1">
    <citation type="journal article" date="2003" name="Nature">
        <title>The genome sequence of the filamentous fungus Neurospora crassa.</title>
        <authorList>
            <person name="Galagan J.E."/>
            <person name="Calvo S.E."/>
            <person name="Borkovich K.A."/>
            <person name="Selker E.U."/>
            <person name="Read N.D."/>
            <person name="Jaffe D.B."/>
            <person name="FitzHugh W."/>
            <person name="Ma L.-J."/>
            <person name="Smirnov S."/>
            <person name="Purcell S."/>
            <person name="Rehman B."/>
            <person name="Elkins T."/>
            <person name="Engels R."/>
            <person name="Wang S."/>
            <person name="Nielsen C.B."/>
            <person name="Butler J."/>
            <person name="Endrizzi M."/>
            <person name="Qui D."/>
            <person name="Ianakiev P."/>
            <person name="Bell-Pedersen D."/>
            <person name="Nelson M.A."/>
            <person name="Werner-Washburne M."/>
            <person name="Selitrennikoff C.P."/>
            <person name="Kinsey J.A."/>
            <person name="Braun E.L."/>
            <person name="Zelter A."/>
            <person name="Schulte U."/>
            <person name="Kothe G.O."/>
            <person name="Jedd G."/>
            <person name="Mewes H.-W."/>
            <person name="Staben C."/>
            <person name="Marcotte E."/>
            <person name="Greenberg D."/>
            <person name="Roy A."/>
            <person name="Foley K."/>
            <person name="Naylor J."/>
            <person name="Stange-Thomann N."/>
            <person name="Barrett R."/>
            <person name="Gnerre S."/>
            <person name="Kamal M."/>
            <person name="Kamvysselis M."/>
            <person name="Mauceli E.W."/>
            <person name="Bielke C."/>
            <person name="Rudd S."/>
            <person name="Frishman D."/>
            <person name="Krystofova S."/>
            <person name="Rasmussen C."/>
            <person name="Metzenberg R.L."/>
            <person name="Perkins D.D."/>
            <person name="Kroken S."/>
            <person name="Cogoni C."/>
            <person name="Macino G."/>
            <person name="Catcheside D.E.A."/>
            <person name="Li W."/>
            <person name="Pratt R.J."/>
            <person name="Osmani S.A."/>
            <person name="DeSouza C.P.C."/>
            <person name="Glass N.L."/>
            <person name="Orbach M.J."/>
            <person name="Berglund J.A."/>
            <person name="Voelker R."/>
            <person name="Yarden O."/>
            <person name="Plamann M."/>
            <person name="Seiler S."/>
            <person name="Dunlap J.C."/>
            <person name="Radford A."/>
            <person name="Aramayo R."/>
            <person name="Natvig D.O."/>
            <person name="Alex L.A."/>
            <person name="Mannhaupt G."/>
            <person name="Ebbole D.J."/>
            <person name="Freitag M."/>
            <person name="Paulsen I."/>
            <person name="Sachs M.S."/>
            <person name="Lander E.S."/>
            <person name="Nusbaum C."/>
            <person name="Birren B.W."/>
        </authorList>
    </citation>
    <scope>NUCLEOTIDE SEQUENCE [LARGE SCALE GENOMIC DNA]</scope>
    <source>
        <strain>ATCC 24698 / 74-OR23-1A / CBS 708.71 / DSM 1257 / FGSC 987</strain>
    </source>
</reference>
<reference evidence="7 8" key="2">
    <citation type="journal article" date="2020" name="Nat. Commun.">
        <title>Analysis of translating mitoribosome reveals functional characteristics of translation in mitochondria of fungi.</title>
        <authorList>
            <person name="Itoh Y."/>
            <person name="Naschberger A."/>
            <person name="Mortezaei N."/>
            <person name="Herrmann J.M."/>
            <person name="Amunts A."/>
        </authorList>
    </citation>
    <scope>STRUCTURE BY ELECTRON MICROSCOPY (2.74 ANGSTROMS)</scope>
</reference>
<proteinExistence type="evidence at protein level"/>
<organism>
    <name type="scientific">Neurospora crassa (strain ATCC 24698 / 74-OR23-1A / CBS 708.71 / DSM 1257 / FGSC 987)</name>
    <dbReference type="NCBI Taxonomy" id="367110"/>
    <lineage>
        <taxon>Eukaryota</taxon>
        <taxon>Fungi</taxon>
        <taxon>Dikarya</taxon>
        <taxon>Ascomycota</taxon>
        <taxon>Pezizomycotina</taxon>
        <taxon>Sordariomycetes</taxon>
        <taxon>Sordariomycetidae</taxon>
        <taxon>Sordariales</taxon>
        <taxon>Sordariaceae</taxon>
        <taxon>Neurospora</taxon>
    </lineage>
</organism>
<protein>
    <recommendedName>
        <fullName evidence="3">Large ribosomal subunit protein mL49</fullName>
    </recommendedName>
</protein>
<evidence type="ECO:0000256" key="1">
    <source>
        <dbReference type="SAM" id="MobiDB-lite"/>
    </source>
</evidence>
<evidence type="ECO:0000269" key="2">
    <source>
    </source>
</evidence>
<evidence type="ECO:0000303" key="3">
    <source>
    </source>
</evidence>
<evidence type="ECO:0000305" key="4"/>
<evidence type="ECO:0000305" key="5">
    <source>
    </source>
</evidence>
<evidence type="ECO:0000312" key="6">
    <source>
        <dbReference type="EMBL" id="EAA30645.1"/>
    </source>
</evidence>
<evidence type="ECO:0007744" key="7">
    <source>
        <dbReference type="PDB" id="6YWE"/>
    </source>
</evidence>
<evidence type="ECO:0007744" key="8">
    <source>
        <dbReference type="PDB" id="6YWS"/>
    </source>
</evidence>
<sequence length="165" mass="18156">MFRSTFFGLSRAIVQPATPLTVRAAFQSRFYSAAAAASQPTTTATTTTPLQQQQQQQPTTQPTTPIQTQTGAAPTESTKPVAKPYLVGRAWTQRLPVYHLAKRGGNKKLTQIKKVQGDGQALRRDLAQFLGLEVKEVRVKVPTGHLEVDGHRREEIVKFLDGLGF</sequence>
<accession>Q7S518</accession>
<dbReference type="EMBL" id="CM002242">
    <property type="protein sequence ID" value="EAA30645.1"/>
    <property type="molecule type" value="Genomic_DNA"/>
</dbReference>
<dbReference type="RefSeq" id="XP_959881.1">
    <property type="nucleotide sequence ID" value="XM_954788.3"/>
</dbReference>
<dbReference type="PDB" id="6YWE">
    <property type="method" value="EM"/>
    <property type="resolution" value="2.99 A"/>
    <property type="chains" value="7=1-165"/>
</dbReference>
<dbReference type="PDB" id="6YWS">
    <property type="method" value="EM"/>
    <property type="resolution" value="2.74 A"/>
    <property type="chains" value="7=1-165"/>
</dbReference>
<dbReference type="PDB" id="6YWV">
    <property type="method" value="EM"/>
    <property type="resolution" value="3.03 A"/>
    <property type="chains" value="7=1-165"/>
</dbReference>
<dbReference type="PDB" id="6YWX">
    <property type="method" value="EM"/>
    <property type="resolution" value="3.10 A"/>
    <property type="chains" value="7=1-165"/>
</dbReference>
<dbReference type="PDB" id="6YWY">
    <property type="method" value="EM"/>
    <property type="resolution" value="3.05 A"/>
    <property type="chains" value="7=1-165"/>
</dbReference>
<dbReference type="PDBsum" id="6YWE"/>
<dbReference type="PDBsum" id="6YWS"/>
<dbReference type="PDBsum" id="6YWV"/>
<dbReference type="PDBsum" id="6YWX"/>
<dbReference type="PDBsum" id="6YWY"/>
<dbReference type="EMDB" id="EMD-10965"/>
<dbReference type="EMDB" id="EMD-10973"/>
<dbReference type="EMDB" id="EMD-10977"/>
<dbReference type="EMDB" id="EMD-10978"/>
<dbReference type="EMDB" id="EMD-10985"/>
<dbReference type="SMR" id="Q7S518"/>
<dbReference type="STRING" id="367110.Q7S518"/>
<dbReference type="PaxDb" id="5141-EFNCRP00000005802"/>
<dbReference type="EnsemblFungi" id="EAA30645">
    <property type="protein sequence ID" value="EAA30645"/>
    <property type="gene ID" value="NCU05890"/>
</dbReference>
<dbReference type="GeneID" id="3875987"/>
<dbReference type="KEGG" id="ncr:NCU05890"/>
<dbReference type="VEuPathDB" id="FungiDB:NCU05890"/>
<dbReference type="HOGENOM" id="CLU_1644759_0_0_1"/>
<dbReference type="InParanoid" id="Q7S518"/>
<dbReference type="OMA" id="HITIKGW"/>
<dbReference type="OrthoDB" id="19439at2759"/>
<dbReference type="Proteomes" id="UP000001805">
    <property type="component" value="Chromosome 7, Linkage Group VII"/>
</dbReference>
<dbReference type="GO" id="GO:0005762">
    <property type="term" value="C:mitochondrial large ribosomal subunit"/>
    <property type="evidence" value="ECO:0000318"/>
    <property type="project" value="GO_Central"/>
</dbReference>
<dbReference type="GO" id="GO:0003735">
    <property type="term" value="F:structural constituent of ribosome"/>
    <property type="evidence" value="ECO:0000318"/>
    <property type="project" value="GO_Central"/>
</dbReference>
<dbReference type="GO" id="GO:0006412">
    <property type="term" value="P:translation"/>
    <property type="evidence" value="ECO:0007669"/>
    <property type="project" value="InterPro"/>
</dbReference>
<dbReference type="FunFam" id="3.30.780.10:FF:000037">
    <property type="entry name" value="Uncharacterized protein"/>
    <property type="match status" value="1"/>
</dbReference>
<dbReference type="Gene3D" id="3.30.780.10">
    <property type="entry name" value="SUI1-like domain"/>
    <property type="match status" value="1"/>
</dbReference>
<dbReference type="InterPro" id="IPR007740">
    <property type="entry name" value="Ribosomal_mL49"/>
</dbReference>
<dbReference type="PANTHER" id="PTHR13477:SF0">
    <property type="entry name" value="LARGE RIBOSOMAL SUBUNIT PROTEIN ML49"/>
    <property type="match status" value="1"/>
</dbReference>
<dbReference type="PANTHER" id="PTHR13477">
    <property type="entry name" value="MITOCHONDRIAL 39S RIBOSOMAL PROTEIN L49"/>
    <property type="match status" value="1"/>
</dbReference>
<dbReference type="Pfam" id="PF05046">
    <property type="entry name" value="Img2"/>
    <property type="match status" value="1"/>
</dbReference>
<keyword id="KW-0002">3D-structure</keyword>
<keyword id="KW-0496">Mitochondrion</keyword>
<keyword id="KW-1185">Reference proteome</keyword>
<keyword id="KW-0687">Ribonucleoprotein</keyword>
<keyword id="KW-0689">Ribosomal protein</keyword>
<feature type="chain" id="PRO_0000458629" description="Large ribosomal subunit protein mL49">
    <location>
        <begin position="1"/>
        <end position="165"/>
    </location>
</feature>
<feature type="region of interest" description="Disordered" evidence="1">
    <location>
        <begin position="42"/>
        <end position="81"/>
    </location>
</feature>
<feature type="compositionally biased region" description="Low complexity" evidence="1">
    <location>
        <begin position="42"/>
        <end position="75"/>
    </location>
</feature>
<gene>
    <name type="primary">img2</name>
    <name evidence="6" type="ORF">NCU05890</name>
</gene>
<name>IMG2_NEUCR</name>